<reference key="1">
    <citation type="journal article" date="2007" name="Environ. Microbiol.">
        <title>Whole-genome analysis of the ammonia-oxidizing bacterium, Nitrosomonas eutropha C91: implications for niche adaptation.</title>
        <authorList>
            <person name="Stein L.Y."/>
            <person name="Arp D.J."/>
            <person name="Berube P.M."/>
            <person name="Chain P.S."/>
            <person name="Hauser L."/>
            <person name="Jetten M.S."/>
            <person name="Klotz M.G."/>
            <person name="Larimer F.W."/>
            <person name="Norton J.M."/>
            <person name="Op den Camp H.J.M."/>
            <person name="Shin M."/>
            <person name="Wei X."/>
        </authorList>
    </citation>
    <scope>NUCLEOTIDE SEQUENCE [LARGE SCALE GENOMIC DNA]</scope>
    <source>
        <strain>DSM 101675 / C91 / Nm57</strain>
    </source>
</reference>
<comment type="function">
    <text evidence="1">Catalyzes the rearrangement of 1-deoxy-D-xylulose 5-phosphate (DXP) to produce the thiazole phosphate moiety of thiamine. Sulfur is provided by the thiocarboxylate moiety of the carrier protein ThiS. In vitro, sulfur can be provided by H(2)S.</text>
</comment>
<comment type="catalytic activity">
    <reaction evidence="1">
        <text>[ThiS sulfur-carrier protein]-C-terminal-Gly-aminoethanethioate + 2-iminoacetate + 1-deoxy-D-xylulose 5-phosphate = [ThiS sulfur-carrier protein]-C-terminal Gly-Gly + 2-[(2R,5Z)-2-carboxy-4-methylthiazol-5(2H)-ylidene]ethyl phosphate + 2 H2O + H(+)</text>
        <dbReference type="Rhea" id="RHEA:26297"/>
        <dbReference type="Rhea" id="RHEA-COMP:12909"/>
        <dbReference type="Rhea" id="RHEA-COMP:19908"/>
        <dbReference type="ChEBI" id="CHEBI:15377"/>
        <dbReference type="ChEBI" id="CHEBI:15378"/>
        <dbReference type="ChEBI" id="CHEBI:57792"/>
        <dbReference type="ChEBI" id="CHEBI:62899"/>
        <dbReference type="ChEBI" id="CHEBI:77846"/>
        <dbReference type="ChEBI" id="CHEBI:90778"/>
        <dbReference type="ChEBI" id="CHEBI:232372"/>
        <dbReference type="EC" id="2.8.1.10"/>
    </reaction>
</comment>
<comment type="pathway">
    <text evidence="1">Cofactor biosynthesis; thiamine diphosphate biosynthesis.</text>
</comment>
<comment type="subunit">
    <text evidence="1">Homotetramer. Forms heterodimers with either ThiH or ThiS.</text>
</comment>
<comment type="subcellular location">
    <subcellularLocation>
        <location evidence="1">Cytoplasm</location>
    </subcellularLocation>
</comment>
<comment type="similarity">
    <text evidence="1">Belongs to the ThiG family.</text>
</comment>
<gene>
    <name evidence="1" type="primary">thiG</name>
    <name type="ordered locus">Neut_0323</name>
</gene>
<protein>
    <recommendedName>
        <fullName evidence="1">Thiazole synthase</fullName>
        <ecNumber evidence="1">2.8.1.10</ecNumber>
    </recommendedName>
</protein>
<name>THIG_NITEC</name>
<organism>
    <name type="scientific">Nitrosomonas eutropha (strain DSM 101675 / C91 / Nm57)</name>
    <dbReference type="NCBI Taxonomy" id="335283"/>
    <lineage>
        <taxon>Bacteria</taxon>
        <taxon>Pseudomonadati</taxon>
        <taxon>Pseudomonadota</taxon>
        <taxon>Betaproteobacteria</taxon>
        <taxon>Nitrosomonadales</taxon>
        <taxon>Nitrosomonadaceae</taxon>
        <taxon>Nitrosomonas</taxon>
    </lineage>
</organism>
<proteinExistence type="inferred from homology"/>
<evidence type="ECO:0000255" key="1">
    <source>
        <dbReference type="HAMAP-Rule" id="MF_00443"/>
    </source>
</evidence>
<evidence type="ECO:0000256" key="2">
    <source>
        <dbReference type="SAM" id="MobiDB-lite"/>
    </source>
</evidence>
<accession>Q0AJ67</accession>
<dbReference type="EC" id="2.8.1.10" evidence="1"/>
<dbReference type="EMBL" id="CP000450">
    <property type="protein sequence ID" value="ABI58604.1"/>
    <property type="molecule type" value="Genomic_DNA"/>
</dbReference>
<dbReference type="RefSeq" id="WP_011633447.1">
    <property type="nucleotide sequence ID" value="NC_008344.1"/>
</dbReference>
<dbReference type="SMR" id="Q0AJ67"/>
<dbReference type="STRING" id="335283.Neut_0323"/>
<dbReference type="KEGG" id="net:Neut_0323"/>
<dbReference type="eggNOG" id="COG2022">
    <property type="taxonomic scope" value="Bacteria"/>
</dbReference>
<dbReference type="HOGENOM" id="CLU_062233_1_1_4"/>
<dbReference type="OrthoDB" id="9805935at2"/>
<dbReference type="UniPathway" id="UPA00060"/>
<dbReference type="Proteomes" id="UP000001966">
    <property type="component" value="Chromosome"/>
</dbReference>
<dbReference type="GO" id="GO:0005737">
    <property type="term" value="C:cytoplasm"/>
    <property type="evidence" value="ECO:0007669"/>
    <property type="project" value="UniProtKB-SubCell"/>
</dbReference>
<dbReference type="GO" id="GO:1990107">
    <property type="term" value="F:thiazole synthase activity"/>
    <property type="evidence" value="ECO:0007669"/>
    <property type="project" value="UniProtKB-EC"/>
</dbReference>
<dbReference type="GO" id="GO:0009229">
    <property type="term" value="P:thiamine diphosphate biosynthetic process"/>
    <property type="evidence" value="ECO:0007669"/>
    <property type="project" value="UniProtKB-UniRule"/>
</dbReference>
<dbReference type="CDD" id="cd04728">
    <property type="entry name" value="ThiG"/>
    <property type="match status" value="1"/>
</dbReference>
<dbReference type="Gene3D" id="3.20.20.70">
    <property type="entry name" value="Aldolase class I"/>
    <property type="match status" value="1"/>
</dbReference>
<dbReference type="HAMAP" id="MF_00443">
    <property type="entry name" value="ThiG"/>
    <property type="match status" value="1"/>
</dbReference>
<dbReference type="InterPro" id="IPR013785">
    <property type="entry name" value="Aldolase_TIM"/>
</dbReference>
<dbReference type="InterPro" id="IPR033983">
    <property type="entry name" value="Thiazole_synthase_ThiG"/>
</dbReference>
<dbReference type="InterPro" id="IPR008867">
    <property type="entry name" value="ThiG"/>
</dbReference>
<dbReference type="PANTHER" id="PTHR34266">
    <property type="entry name" value="THIAZOLE SYNTHASE"/>
    <property type="match status" value="1"/>
</dbReference>
<dbReference type="PANTHER" id="PTHR34266:SF2">
    <property type="entry name" value="THIAZOLE SYNTHASE"/>
    <property type="match status" value="1"/>
</dbReference>
<dbReference type="Pfam" id="PF05690">
    <property type="entry name" value="ThiG"/>
    <property type="match status" value="1"/>
</dbReference>
<dbReference type="SUPFAM" id="SSF110399">
    <property type="entry name" value="ThiG-like"/>
    <property type="match status" value="1"/>
</dbReference>
<feature type="chain" id="PRO_1000026018" description="Thiazole synthase">
    <location>
        <begin position="1"/>
        <end position="268"/>
    </location>
</feature>
<feature type="region of interest" description="Disordered" evidence="2">
    <location>
        <begin position="248"/>
        <end position="268"/>
    </location>
</feature>
<feature type="active site" description="Schiff-base intermediate with DXP" evidence="1">
    <location>
        <position position="100"/>
    </location>
</feature>
<feature type="binding site" evidence="1">
    <location>
        <position position="161"/>
    </location>
    <ligand>
        <name>1-deoxy-D-xylulose 5-phosphate</name>
        <dbReference type="ChEBI" id="CHEBI:57792"/>
    </ligand>
</feature>
<feature type="binding site" evidence="1">
    <location>
        <begin position="187"/>
        <end position="188"/>
    </location>
    <ligand>
        <name>1-deoxy-D-xylulose 5-phosphate</name>
        <dbReference type="ChEBI" id="CHEBI:57792"/>
    </ligand>
</feature>
<feature type="binding site" evidence="1">
    <location>
        <begin position="209"/>
        <end position="210"/>
    </location>
    <ligand>
        <name>1-deoxy-D-xylulose 5-phosphate</name>
        <dbReference type="ChEBI" id="CHEBI:57792"/>
    </ligand>
</feature>
<sequence length="268" mass="28352">MDTLVIAGKSYTSRLLLGTGKYKDFTETRAAVDVSGTQIITVAIRRTNIGQNPDEPNLLDVLPPSQFTLLPNTAGCYTAADAVRTLRLARELLDGHALVKLEVLGDQKTLFPDVVATLEAARILVKDGFHVMVYTSDDPIVARQLEDIGCAAIMPLASLIGSGMGILNPWNLQIIIDKVKVPVIVDAGVGTASDAAIAMELGCDGVLMNTAVASARNPILMASAMRKAVEAGREAWLAGRMPKKIYQATPSSPSEGMITGSPHSAANN</sequence>
<keyword id="KW-0963">Cytoplasm</keyword>
<keyword id="KW-0704">Schiff base</keyword>
<keyword id="KW-0784">Thiamine biosynthesis</keyword>
<keyword id="KW-0808">Transferase</keyword>